<comment type="function">
    <text evidence="1">This is one of the proteins that bind and probably mediate the attachment of the 5S RNA into the large ribosomal subunit, where it forms part of the central protuberance.</text>
</comment>
<comment type="subunit">
    <text evidence="1">Part of the 50S ribosomal subunit; part of the 5S rRNA/L5/L18/L25 subcomplex. Contacts the 5S and 23S rRNAs.</text>
</comment>
<comment type="similarity">
    <text evidence="1">Belongs to the universal ribosomal protein uL18 family.</text>
</comment>
<protein>
    <recommendedName>
        <fullName evidence="1">Large ribosomal subunit protein uL18</fullName>
    </recommendedName>
    <alternativeName>
        <fullName evidence="2">50S ribosomal protein L18</fullName>
    </alternativeName>
</protein>
<gene>
    <name evidence="1" type="primary">rplR</name>
    <name type="ordered locus">Asuc_0475</name>
</gene>
<accession>A6VLK4</accession>
<reference key="1">
    <citation type="journal article" date="2010" name="BMC Genomics">
        <title>A genomic perspective on the potential of Actinobacillus succinogenes for industrial succinate production.</title>
        <authorList>
            <person name="McKinlay J.B."/>
            <person name="Laivenieks M."/>
            <person name="Schindler B.D."/>
            <person name="McKinlay A.A."/>
            <person name="Siddaramappa S."/>
            <person name="Challacombe J.F."/>
            <person name="Lowry S.R."/>
            <person name="Clum A."/>
            <person name="Lapidus A.L."/>
            <person name="Burkhart K.B."/>
            <person name="Harkins V."/>
            <person name="Vieille C."/>
        </authorList>
    </citation>
    <scope>NUCLEOTIDE SEQUENCE [LARGE SCALE GENOMIC DNA]</scope>
    <source>
        <strain>ATCC 55618 / DSM 22257 / CCUG 43843 / 130Z</strain>
    </source>
</reference>
<sequence>MDKKSARIRRAARARHMMREQGVTRLVVHRTPRHIYAQVIAPNGSEVLAAASTVEKEISAQVKYTGNKDAAAVVGKLVAERALAKGVKDVAFDRSGFKYHGRVQSLADAAREAGLQF</sequence>
<organism>
    <name type="scientific">Actinobacillus succinogenes (strain ATCC 55618 / DSM 22257 / CCUG 43843 / 130Z)</name>
    <dbReference type="NCBI Taxonomy" id="339671"/>
    <lineage>
        <taxon>Bacteria</taxon>
        <taxon>Pseudomonadati</taxon>
        <taxon>Pseudomonadota</taxon>
        <taxon>Gammaproteobacteria</taxon>
        <taxon>Pasteurellales</taxon>
        <taxon>Pasteurellaceae</taxon>
        <taxon>Actinobacillus</taxon>
    </lineage>
</organism>
<dbReference type="EMBL" id="CP000746">
    <property type="protein sequence ID" value="ABR73851.1"/>
    <property type="molecule type" value="Genomic_DNA"/>
</dbReference>
<dbReference type="RefSeq" id="WP_012072232.1">
    <property type="nucleotide sequence ID" value="NC_009655.1"/>
</dbReference>
<dbReference type="SMR" id="A6VLK4"/>
<dbReference type="STRING" id="339671.Asuc_0475"/>
<dbReference type="KEGG" id="asu:Asuc_0475"/>
<dbReference type="eggNOG" id="COG0256">
    <property type="taxonomic scope" value="Bacteria"/>
</dbReference>
<dbReference type="HOGENOM" id="CLU_098841_0_1_6"/>
<dbReference type="OrthoDB" id="9810939at2"/>
<dbReference type="Proteomes" id="UP000001114">
    <property type="component" value="Chromosome"/>
</dbReference>
<dbReference type="GO" id="GO:0022625">
    <property type="term" value="C:cytosolic large ribosomal subunit"/>
    <property type="evidence" value="ECO:0007669"/>
    <property type="project" value="TreeGrafter"/>
</dbReference>
<dbReference type="GO" id="GO:0008097">
    <property type="term" value="F:5S rRNA binding"/>
    <property type="evidence" value="ECO:0007669"/>
    <property type="project" value="TreeGrafter"/>
</dbReference>
<dbReference type="GO" id="GO:0003735">
    <property type="term" value="F:structural constituent of ribosome"/>
    <property type="evidence" value="ECO:0007669"/>
    <property type="project" value="InterPro"/>
</dbReference>
<dbReference type="GO" id="GO:0006412">
    <property type="term" value="P:translation"/>
    <property type="evidence" value="ECO:0007669"/>
    <property type="project" value="UniProtKB-UniRule"/>
</dbReference>
<dbReference type="CDD" id="cd00432">
    <property type="entry name" value="Ribosomal_L18_L5e"/>
    <property type="match status" value="1"/>
</dbReference>
<dbReference type="FunFam" id="3.30.420.100:FF:000001">
    <property type="entry name" value="50S ribosomal protein L18"/>
    <property type="match status" value="1"/>
</dbReference>
<dbReference type="Gene3D" id="3.30.420.100">
    <property type="match status" value="1"/>
</dbReference>
<dbReference type="HAMAP" id="MF_01337_B">
    <property type="entry name" value="Ribosomal_uL18_B"/>
    <property type="match status" value="1"/>
</dbReference>
<dbReference type="InterPro" id="IPR004389">
    <property type="entry name" value="Ribosomal_uL18_bac-type"/>
</dbReference>
<dbReference type="InterPro" id="IPR005484">
    <property type="entry name" value="Ribosomal_uL18_bac/euk"/>
</dbReference>
<dbReference type="NCBIfam" id="TIGR00060">
    <property type="entry name" value="L18_bact"/>
    <property type="match status" value="1"/>
</dbReference>
<dbReference type="PANTHER" id="PTHR12899">
    <property type="entry name" value="39S RIBOSOMAL PROTEIN L18, MITOCHONDRIAL"/>
    <property type="match status" value="1"/>
</dbReference>
<dbReference type="PANTHER" id="PTHR12899:SF3">
    <property type="entry name" value="LARGE RIBOSOMAL SUBUNIT PROTEIN UL18M"/>
    <property type="match status" value="1"/>
</dbReference>
<dbReference type="Pfam" id="PF00861">
    <property type="entry name" value="Ribosomal_L18p"/>
    <property type="match status" value="1"/>
</dbReference>
<dbReference type="SUPFAM" id="SSF53137">
    <property type="entry name" value="Translational machinery components"/>
    <property type="match status" value="1"/>
</dbReference>
<proteinExistence type="inferred from homology"/>
<name>RL18_ACTSZ</name>
<keyword id="KW-1185">Reference proteome</keyword>
<keyword id="KW-0687">Ribonucleoprotein</keyword>
<keyword id="KW-0689">Ribosomal protein</keyword>
<keyword id="KW-0694">RNA-binding</keyword>
<keyword id="KW-0699">rRNA-binding</keyword>
<feature type="chain" id="PRO_1000073302" description="Large ribosomal subunit protein uL18">
    <location>
        <begin position="1"/>
        <end position="117"/>
    </location>
</feature>
<evidence type="ECO:0000255" key="1">
    <source>
        <dbReference type="HAMAP-Rule" id="MF_01337"/>
    </source>
</evidence>
<evidence type="ECO:0000305" key="2"/>